<dbReference type="SMR" id="B0M2T2"/>
<dbReference type="GO" id="GO:0072562">
    <property type="term" value="C:blood microparticle"/>
    <property type="evidence" value="ECO:0007669"/>
    <property type="project" value="TreeGrafter"/>
</dbReference>
<dbReference type="GO" id="GO:0031838">
    <property type="term" value="C:haptoglobin-hemoglobin complex"/>
    <property type="evidence" value="ECO:0007669"/>
    <property type="project" value="TreeGrafter"/>
</dbReference>
<dbReference type="GO" id="GO:0005833">
    <property type="term" value="C:hemoglobin complex"/>
    <property type="evidence" value="ECO:0007669"/>
    <property type="project" value="InterPro"/>
</dbReference>
<dbReference type="GO" id="GO:0031720">
    <property type="term" value="F:haptoglobin binding"/>
    <property type="evidence" value="ECO:0007669"/>
    <property type="project" value="TreeGrafter"/>
</dbReference>
<dbReference type="GO" id="GO:0020037">
    <property type="term" value="F:heme binding"/>
    <property type="evidence" value="ECO:0007669"/>
    <property type="project" value="InterPro"/>
</dbReference>
<dbReference type="GO" id="GO:0005506">
    <property type="term" value="F:iron ion binding"/>
    <property type="evidence" value="ECO:0007669"/>
    <property type="project" value="InterPro"/>
</dbReference>
<dbReference type="GO" id="GO:0043177">
    <property type="term" value="F:organic acid binding"/>
    <property type="evidence" value="ECO:0007669"/>
    <property type="project" value="TreeGrafter"/>
</dbReference>
<dbReference type="GO" id="GO:0019825">
    <property type="term" value="F:oxygen binding"/>
    <property type="evidence" value="ECO:0007669"/>
    <property type="project" value="InterPro"/>
</dbReference>
<dbReference type="GO" id="GO:0005344">
    <property type="term" value="F:oxygen carrier activity"/>
    <property type="evidence" value="ECO:0007669"/>
    <property type="project" value="UniProtKB-KW"/>
</dbReference>
<dbReference type="GO" id="GO:0004601">
    <property type="term" value="F:peroxidase activity"/>
    <property type="evidence" value="ECO:0007669"/>
    <property type="project" value="TreeGrafter"/>
</dbReference>
<dbReference type="GO" id="GO:0042744">
    <property type="term" value="P:hydrogen peroxide catabolic process"/>
    <property type="evidence" value="ECO:0007669"/>
    <property type="project" value="TreeGrafter"/>
</dbReference>
<dbReference type="CDD" id="cd08927">
    <property type="entry name" value="Hb-alpha-like"/>
    <property type="match status" value="1"/>
</dbReference>
<dbReference type="FunFam" id="1.10.490.10:FF:000002">
    <property type="entry name" value="Hemoglobin subunit alpha"/>
    <property type="match status" value="1"/>
</dbReference>
<dbReference type="Gene3D" id="1.10.490.10">
    <property type="entry name" value="Globins"/>
    <property type="match status" value="1"/>
</dbReference>
<dbReference type="InterPro" id="IPR000971">
    <property type="entry name" value="Globin"/>
</dbReference>
<dbReference type="InterPro" id="IPR009050">
    <property type="entry name" value="Globin-like_sf"/>
</dbReference>
<dbReference type="InterPro" id="IPR012292">
    <property type="entry name" value="Globin/Proto"/>
</dbReference>
<dbReference type="InterPro" id="IPR002338">
    <property type="entry name" value="Hemoglobin_a-typ"/>
</dbReference>
<dbReference type="InterPro" id="IPR050056">
    <property type="entry name" value="Hemoglobin_oxygen_transport"/>
</dbReference>
<dbReference type="InterPro" id="IPR002339">
    <property type="entry name" value="Hemoglobin_pi"/>
</dbReference>
<dbReference type="PANTHER" id="PTHR11442">
    <property type="entry name" value="HEMOGLOBIN FAMILY MEMBER"/>
    <property type="match status" value="1"/>
</dbReference>
<dbReference type="PANTHER" id="PTHR11442:SF48">
    <property type="entry name" value="HEMOGLOBIN SUBUNIT ALPHA"/>
    <property type="match status" value="1"/>
</dbReference>
<dbReference type="Pfam" id="PF00042">
    <property type="entry name" value="Globin"/>
    <property type="match status" value="1"/>
</dbReference>
<dbReference type="PRINTS" id="PR00612">
    <property type="entry name" value="ALPHAHAEM"/>
</dbReference>
<dbReference type="PRINTS" id="PR00815">
    <property type="entry name" value="PIHAEM"/>
</dbReference>
<dbReference type="SUPFAM" id="SSF46458">
    <property type="entry name" value="Globin-like"/>
    <property type="match status" value="1"/>
</dbReference>
<dbReference type="PROSITE" id="PS01033">
    <property type="entry name" value="GLOBIN"/>
    <property type="match status" value="1"/>
</dbReference>
<accession>B0M2T2</accession>
<sequence length="141" mass="15590">VLSSDDKCNVKAVWCKVAGHLEEYGAEALERMFCAYPQTKIYFPHFDLSHGSAQIRAHGKKVFAALHEAVNHIDDLPGALCRLSELHAHSLRVDPVNFKFLAQCVLVVVAIHHPGSLTPEVHASLDKFLCAVSSVLTSKYR</sequence>
<feature type="chain" id="PRO_0000421840" description="Hemoglobin subunit alpha">
    <location>
        <begin position="1"/>
        <end position="141"/>
    </location>
</feature>
<feature type="domain" description="Globin" evidence="2">
    <location>
        <begin position="1"/>
        <end position="141"/>
    </location>
</feature>
<feature type="binding site" evidence="2">
    <location>
        <position position="58"/>
    </location>
    <ligand>
        <name>O2</name>
        <dbReference type="ChEBI" id="CHEBI:15379"/>
    </ligand>
</feature>
<feature type="binding site" description="proximal binding residue" evidence="2">
    <location>
        <position position="87"/>
    </location>
    <ligand>
        <name>heme b</name>
        <dbReference type="ChEBI" id="CHEBI:60344"/>
    </ligand>
    <ligandPart>
        <name>Fe</name>
        <dbReference type="ChEBI" id="CHEBI:18248"/>
    </ligandPart>
</feature>
<comment type="function">
    <text evidence="3 5">Involved in oxygen transport from the lung to the various peripheral tissues. Has antimicrobial activity against B.subtilis ATCC 6633. Has antioxidant activity.</text>
</comment>
<comment type="subunit">
    <text evidence="5">Heterotetramer of two alpha chains and two beta chains.</text>
</comment>
<comment type="tissue specificity">
    <text evidence="5">Red blood cells.</text>
</comment>
<comment type="similarity">
    <text evidence="2">Belongs to the globin family.</text>
</comment>
<reference evidence="5" key="1">
    <citation type="journal article" date="2012" name="Protein J.">
        <title>Complete amino acid sequence of globin chains and biological activity of fragmented crocodile hemoglobin (Crocodylus siamensis).</title>
        <authorList>
            <person name="Srihongthong S."/>
            <person name="Pakdeesuwan A."/>
            <person name="Daduang S."/>
            <person name="Araki T."/>
            <person name="Dhiravisit A."/>
            <person name="Thammasirirak S."/>
        </authorList>
    </citation>
    <scope>PROTEIN SEQUENCE</scope>
    <scope>FUNCTION</scope>
    <source>
        <tissue evidence="3">Erythrocyte</tissue>
    </source>
</reference>
<name>HBA_CROSI</name>
<evidence type="ECO:0000250" key="1">
    <source>
        <dbReference type="UniProtKB" id="P01966"/>
    </source>
</evidence>
<evidence type="ECO:0000255" key="2">
    <source>
        <dbReference type="PROSITE-ProRule" id="PRU00238"/>
    </source>
</evidence>
<evidence type="ECO:0000269" key="3">
    <source>
    </source>
</evidence>
<evidence type="ECO:0000303" key="4">
    <source>
    </source>
</evidence>
<evidence type="ECO:0000305" key="5"/>
<keyword id="KW-0903">Direct protein sequencing</keyword>
<keyword id="KW-0349">Heme</keyword>
<keyword id="KW-0408">Iron</keyword>
<keyword id="KW-0479">Metal-binding</keyword>
<keyword id="KW-0561">Oxygen transport</keyword>
<keyword id="KW-0813">Transport</keyword>
<gene>
    <name evidence="1" type="primary">HBA</name>
</gene>
<proteinExistence type="evidence at protein level"/>
<protein>
    <recommendedName>
        <fullName evidence="1">Hemoglobin subunit alpha</fullName>
    </recommendedName>
    <alternativeName>
        <fullName evidence="1">Alpha-globin</fullName>
    </alternativeName>
    <alternativeName>
        <fullName evidence="4">Hemoglobin alpha chain</fullName>
    </alternativeName>
</protein>
<organism>
    <name type="scientific">Crocodylus siamensis</name>
    <name type="common">Siamese crocodile</name>
    <dbReference type="NCBI Taxonomy" id="68455"/>
    <lineage>
        <taxon>Eukaryota</taxon>
        <taxon>Metazoa</taxon>
        <taxon>Chordata</taxon>
        <taxon>Craniata</taxon>
        <taxon>Vertebrata</taxon>
        <taxon>Euteleostomi</taxon>
        <taxon>Archelosauria</taxon>
        <taxon>Archosauria</taxon>
        <taxon>Crocodylia</taxon>
        <taxon>Longirostres</taxon>
        <taxon>Crocodylidae</taxon>
        <taxon>Crocodylus</taxon>
    </lineage>
</organism>